<keyword id="KW-0903">Direct protein sequencing</keyword>
<keyword id="KW-1015">Disulfide bond</keyword>
<keyword id="KW-0646">Protease inhibitor</keyword>
<keyword id="KW-1185">Reference proteome</keyword>
<keyword id="KW-0722">Serine protease inhibitor</keyword>
<reference key="1">
    <citation type="journal article" date="1988" name="Biol. Chem. Hoppe-Seyler">
        <title>Amino-acid sequences of two basic chymotrypsin inhibitors from silkworm larval hemolymph.</title>
        <authorList>
            <person name="Sasaki T."/>
        </authorList>
    </citation>
    <scope>PROTEIN SEQUENCE</scope>
    <source>
        <tissue>Larval hemolymph</tissue>
    </source>
</reference>
<evidence type="ECO:0000250" key="1"/>
<evidence type="ECO:0000255" key="2">
    <source>
        <dbReference type="PROSITE-ProRule" id="PRU00031"/>
    </source>
</evidence>
<dbReference type="PIR" id="S01802">
    <property type="entry name" value="S01802"/>
</dbReference>
<dbReference type="SMR" id="P10831"/>
<dbReference type="STRING" id="7091.P10831"/>
<dbReference type="MEROPS" id="I02.018"/>
<dbReference type="InParanoid" id="P10831"/>
<dbReference type="Proteomes" id="UP000005204">
    <property type="component" value="Unassembled WGS sequence"/>
</dbReference>
<dbReference type="GO" id="GO:0005615">
    <property type="term" value="C:extracellular space"/>
    <property type="evidence" value="ECO:0007669"/>
    <property type="project" value="TreeGrafter"/>
</dbReference>
<dbReference type="GO" id="GO:0004867">
    <property type="term" value="F:serine-type endopeptidase inhibitor activity"/>
    <property type="evidence" value="ECO:0007669"/>
    <property type="project" value="UniProtKB-KW"/>
</dbReference>
<dbReference type="CDD" id="cd22634">
    <property type="entry name" value="Kunitz_SCI-I-like"/>
    <property type="match status" value="1"/>
</dbReference>
<dbReference type="FunFam" id="4.10.410.10:FF:000020">
    <property type="entry name" value="Collagen, type VI, alpha 3"/>
    <property type="match status" value="1"/>
</dbReference>
<dbReference type="Gene3D" id="4.10.410.10">
    <property type="entry name" value="Pancreatic trypsin inhibitor Kunitz domain"/>
    <property type="match status" value="1"/>
</dbReference>
<dbReference type="InterPro" id="IPR002223">
    <property type="entry name" value="Kunitz_BPTI"/>
</dbReference>
<dbReference type="InterPro" id="IPR036880">
    <property type="entry name" value="Kunitz_BPTI_sf"/>
</dbReference>
<dbReference type="InterPro" id="IPR020901">
    <property type="entry name" value="Prtase_inh_Kunz-CS"/>
</dbReference>
<dbReference type="InterPro" id="IPR050098">
    <property type="entry name" value="TFPI/VKTCI-like"/>
</dbReference>
<dbReference type="PANTHER" id="PTHR10083">
    <property type="entry name" value="KUNITZ-TYPE PROTEASE INHIBITOR-RELATED"/>
    <property type="match status" value="1"/>
</dbReference>
<dbReference type="PANTHER" id="PTHR10083:SF373">
    <property type="entry name" value="SERINE PEPTIDASE INHIBITOR, KUNITZ TYPE, 2"/>
    <property type="match status" value="1"/>
</dbReference>
<dbReference type="Pfam" id="PF00014">
    <property type="entry name" value="Kunitz_BPTI"/>
    <property type="match status" value="1"/>
</dbReference>
<dbReference type="PRINTS" id="PR00759">
    <property type="entry name" value="BASICPTASE"/>
</dbReference>
<dbReference type="SMART" id="SM00131">
    <property type="entry name" value="KU"/>
    <property type="match status" value="1"/>
</dbReference>
<dbReference type="SUPFAM" id="SSF57362">
    <property type="entry name" value="BPTI-like"/>
    <property type="match status" value="1"/>
</dbReference>
<dbReference type="PROSITE" id="PS00280">
    <property type="entry name" value="BPTI_KUNITZ_1"/>
    <property type="match status" value="1"/>
</dbReference>
<dbReference type="PROSITE" id="PS50279">
    <property type="entry name" value="BPTI_KUNITZ_2"/>
    <property type="match status" value="1"/>
</dbReference>
<protein>
    <recommendedName>
        <fullName>Chymotrypsin inhibitor SCI-I</fullName>
    </recommendedName>
</protein>
<accession>P10831</accession>
<proteinExistence type="evidence at protein level"/>
<sequence length="62" mass="7065">DKPTTKPICEQAFGNSGPCFAYIKLYSYNQKTKKCEEFIYGGCQGNDNRFITLAECEQKCIK</sequence>
<organism>
    <name type="scientific">Bombyx mori</name>
    <name type="common">Silk moth</name>
    <dbReference type="NCBI Taxonomy" id="7091"/>
    <lineage>
        <taxon>Eukaryota</taxon>
        <taxon>Metazoa</taxon>
        <taxon>Ecdysozoa</taxon>
        <taxon>Arthropoda</taxon>
        <taxon>Hexapoda</taxon>
        <taxon>Insecta</taxon>
        <taxon>Pterygota</taxon>
        <taxon>Neoptera</taxon>
        <taxon>Endopterygota</taxon>
        <taxon>Lepidoptera</taxon>
        <taxon>Glossata</taxon>
        <taxon>Ditrysia</taxon>
        <taxon>Bombycoidea</taxon>
        <taxon>Bombycidae</taxon>
        <taxon>Bombycinae</taxon>
        <taxon>Bombyx</taxon>
    </lineage>
</organism>
<feature type="chain" id="PRO_0000155421" description="Chymotrypsin inhibitor SCI-I">
    <location>
        <begin position="1"/>
        <end position="62"/>
    </location>
</feature>
<feature type="domain" description="BPTI/Kunitz inhibitor" evidence="2">
    <location>
        <begin position="9"/>
        <end position="60"/>
    </location>
</feature>
<feature type="site" description="Reactive bond" evidence="1">
    <location>
        <begin position="20"/>
        <end position="21"/>
    </location>
</feature>
<feature type="disulfide bond" evidence="2">
    <location>
        <begin position="9"/>
        <end position="60"/>
    </location>
</feature>
<feature type="disulfide bond" evidence="2">
    <location>
        <begin position="19"/>
        <end position="43"/>
    </location>
</feature>
<feature type="disulfide bond" evidence="2">
    <location>
        <begin position="35"/>
        <end position="56"/>
    </location>
</feature>
<name>ISC1_BOMMO</name>
<comment type="function">
    <text>Inhibits chymotrypsin and thus avoids the accidental chymotrypsin-mediated activation of prophenoloxidase. This enzyme is required by the insect immune system to produce melanin which is used to engulf foreign objects.</text>
</comment>